<evidence type="ECO:0000250" key="1">
    <source>
        <dbReference type="UniProtKB" id="A0A144A134"/>
    </source>
</evidence>
<evidence type="ECO:0000250" key="2">
    <source>
        <dbReference type="UniProtKB" id="Q99312"/>
    </source>
</evidence>
<evidence type="ECO:0000305" key="3"/>
<sequence>MTSRYRVEYALKSHRRDEFIEWIKGLLAVPFVLHADVENYDTDFMKHYEDPEAYEDYLLSREYEIALECQNRYKEIFADVEKLVNHAIIIDKLQDKNPTYVDTSRLRKLVPSVGRFFTPLPLTEAFLVEDSRRSISKRRLVSPSFNDVRSILNTAQVLALAKMYQDSDESGSRLKLITFDGDVTLYADGSSLTPDAPVIDKLIKLLSMNLFIGVVTAAGYPGQSGVPQYYERLKGLIDRIRTTPELNDHQRENLLVMGGESNYLFRYDNEFGNLKFIEADEWYLPIMSSWDKLKIDYIMSTTDKHLKHLQKKFKLDDMDKTTIIRKERSIGIIPNPGYRILREHLEEMVLSCSMKLQEILARTARTPVNMEIVNQLDTSQAVSTQNAADDHIKVCAFNGGSDVWVDIGDKSLGVESLQKYLCKDVKYEHKVCPILKSESLHIGDQFASLGANDFKARLSACTVWIASPRETVAILEDLIQHLSNK</sequence>
<dbReference type="EC" id="3.1.3.99" evidence="2"/>
<dbReference type="EMBL" id="CR382139">
    <property type="protein sequence ID" value="CAG90331.2"/>
    <property type="molecule type" value="Genomic_DNA"/>
</dbReference>
<dbReference type="RefSeq" id="XP_461870.2">
    <property type="nucleotide sequence ID" value="XM_461870.1"/>
</dbReference>
<dbReference type="SMR" id="Q6BIV1"/>
<dbReference type="FunCoup" id="Q6BIV1">
    <property type="interactions" value="97"/>
</dbReference>
<dbReference type="STRING" id="284592.Q6BIV1"/>
<dbReference type="GeneID" id="2904750"/>
<dbReference type="KEGG" id="dha:DEHA2G07414g"/>
<dbReference type="VEuPathDB" id="FungiDB:DEHA2G07414g"/>
<dbReference type="eggNOG" id="ENOG502QR24">
    <property type="taxonomic scope" value="Eukaryota"/>
</dbReference>
<dbReference type="HOGENOM" id="CLU_031816_1_0_1"/>
<dbReference type="InParanoid" id="Q6BIV1"/>
<dbReference type="OMA" id="WGVLACQ"/>
<dbReference type="OrthoDB" id="185373at2759"/>
<dbReference type="Proteomes" id="UP000000599">
    <property type="component" value="Chromosome G"/>
</dbReference>
<dbReference type="GO" id="GO:0005524">
    <property type="term" value="F:ATP binding"/>
    <property type="evidence" value="ECO:0007669"/>
    <property type="project" value="UniProtKB-KW"/>
</dbReference>
<dbReference type="GO" id="GO:0050483">
    <property type="term" value="F:IMP 5'-nucleotidase activity"/>
    <property type="evidence" value="ECO:0007669"/>
    <property type="project" value="InterPro"/>
</dbReference>
<dbReference type="GO" id="GO:0000287">
    <property type="term" value="F:magnesium ion binding"/>
    <property type="evidence" value="ECO:0007669"/>
    <property type="project" value="InterPro"/>
</dbReference>
<dbReference type="GO" id="GO:0006190">
    <property type="term" value="P:inosine salvage"/>
    <property type="evidence" value="ECO:0007669"/>
    <property type="project" value="InterPro"/>
</dbReference>
<dbReference type="GO" id="GO:0071590">
    <property type="term" value="P:nicotinamide riboside biosynthetic process"/>
    <property type="evidence" value="ECO:0007669"/>
    <property type="project" value="TreeGrafter"/>
</dbReference>
<dbReference type="GO" id="GO:0071592">
    <property type="term" value="P:nicotinic acid riboside biosynthetic process"/>
    <property type="evidence" value="ECO:0007669"/>
    <property type="project" value="TreeGrafter"/>
</dbReference>
<dbReference type="GO" id="GO:0009117">
    <property type="term" value="P:nucleotide metabolic process"/>
    <property type="evidence" value="ECO:0007669"/>
    <property type="project" value="UniProtKB-KW"/>
</dbReference>
<dbReference type="InterPro" id="IPR009453">
    <property type="entry name" value="ISN1"/>
</dbReference>
<dbReference type="PANTHER" id="PTHR28213">
    <property type="entry name" value="IMP-SPECIFIC 5'-NUCLEOTIDASE 1"/>
    <property type="match status" value="1"/>
</dbReference>
<dbReference type="PANTHER" id="PTHR28213:SF1">
    <property type="entry name" value="IMP-SPECIFIC 5'-NUCLEOTIDASE 1"/>
    <property type="match status" value="1"/>
</dbReference>
<dbReference type="Pfam" id="PF06437">
    <property type="entry name" value="ISN1"/>
    <property type="match status" value="1"/>
</dbReference>
<dbReference type="PIRSF" id="PIRSF028836">
    <property type="entry name" value="ISN1"/>
    <property type="match status" value="1"/>
</dbReference>
<feature type="chain" id="PRO_0000084250" description="IMP-specific 5'-nucleotidase 1">
    <location>
        <begin position="1"/>
        <end position="485"/>
    </location>
</feature>
<feature type="active site" description="Nucleophile" evidence="1">
    <location>
        <position position="180"/>
    </location>
</feature>
<feature type="active site" description="Proton donor" evidence="1">
    <location>
        <position position="182"/>
    </location>
</feature>
<feature type="binding site" evidence="1">
    <location>
        <position position="132"/>
    </location>
    <ligand>
        <name>ATP</name>
        <dbReference type="ChEBI" id="CHEBI:30616"/>
        <note>allosteric activator</note>
    </ligand>
</feature>
<feature type="binding site" evidence="1">
    <location>
        <position position="180"/>
    </location>
    <ligand>
        <name>IMP</name>
        <dbReference type="ChEBI" id="CHEBI:58053"/>
    </ligand>
</feature>
<feature type="binding site" evidence="1">
    <location>
        <position position="180"/>
    </location>
    <ligand>
        <name>Mg(2+)</name>
        <dbReference type="ChEBI" id="CHEBI:18420"/>
    </ligand>
</feature>
<feature type="binding site" evidence="1">
    <location>
        <position position="182"/>
    </location>
    <ligand>
        <name>IMP</name>
        <dbReference type="ChEBI" id="CHEBI:58053"/>
    </ligand>
</feature>
<feature type="binding site" evidence="1">
    <location>
        <position position="182"/>
    </location>
    <ligand>
        <name>Mg(2+)</name>
        <dbReference type="ChEBI" id="CHEBI:18420"/>
    </ligand>
</feature>
<feature type="binding site" evidence="1">
    <location>
        <position position="188"/>
    </location>
    <ligand>
        <name>IMP</name>
        <dbReference type="ChEBI" id="CHEBI:58053"/>
    </ligand>
</feature>
<feature type="binding site" evidence="1">
    <location>
        <position position="216"/>
    </location>
    <ligand>
        <name>IMP</name>
        <dbReference type="ChEBI" id="CHEBI:58053"/>
    </ligand>
</feature>
<feature type="binding site" evidence="1">
    <location>
        <position position="402"/>
    </location>
    <ligand>
        <name>IMP</name>
        <dbReference type="ChEBI" id="CHEBI:58053"/>
    </ligand>
</feature>
<feature type="binding site" evidence="1">
    <location>
        <position position="410"/>
    </location>
    <ligand>
        <name>IMP</name>
        <dbReference type="ChEBI" id="CHEBI:58053"/>
    </ligand>
</feature>
<feature type="binding site" evidence="1">
    <location>
        <position position="444"/>
    </location>
    <ligand>
        <name>Mg(2+)</name>
        <dbReference type="ChEBI" id="CHEBI:18420"/>
    </ligand>
</feature>
<keyword id="KW-0067">ATP-binding</keyword>
<keyword id="KW-0378">Hydrolase</keyword>
<keyword id="KW-0460">Magnesium</keyword>
<keyword id="KW-0479">Metal-binding</keyword>
<keyword id="KW-0546">Nucleotide metabolism</keyword>
<keyword id="KW-0547">Nucleotide-binding</keyword>
<keyword id="KW-1185">Reference proteome</keyword>
<name>ISN1_DEBHA</name>
<gene>
    <name type="primary">ISN1</name>
    <name type="ordered locus">DEHA2G07414g</name>
</gene>
<organism>
    <name type="scientific">Debaryomyces hansenii (strain ATCC 36239 / CBS 767 / BCRC 21394 / JCM 1990 / NBRC 0083 / IGC 2968)</name>
    <name type="common">Yeast</name>
    <name type="synonym">Torulaspora hansenii</name>
    <dbReference type="NCBI Taxonomy" id="284592"/>
    <lineage>
        <taxon>Eukaryota</taxon>
        <taxon>Fungi</taxon>
        <taxon>Dikarya</taxon>
        <taxon>Ascomycota</taxon>
        <taxon>Saccharomycotina</taxon>
        <taxon>Pichiomycetes</taxon>
        <taxon>Debaryomycetaceae</taxon>
        <taxon>Debaryomyces</taxon>
    </lineage>
</organism>
<accession>Q6BIV1</accession>
<protein>
    <recommendedName>
        <fullName>IMP-specific 5'-nucleotidase 1</fullName>
        <ecNumber evidence="2">3.1.3.99</ecNumber>
    </recommendedName>
</protein>
<proteinExistence type="inferred from homology"/>
<reference key="1">
    <citation type="journal article" date="2004" name="Nature">
        <title>Genome evolution in yeasts.</title>
        <authorList>
            <person name="Dujon B."/>
            <person name="Sherman D."/>
            <person name="Fischer G."/>
            <person name="Durrens P."/>
            <person name="Casaregola S."/>
            <person name="Lafontaine I."/>
            <person name="de Montigny J."/>
            <person name="Marck C."/>
            <person name="Neuveglise C."/>
            <person name="Talla E."/>
            <person name="Goffard N."/>
            <person name="Frangeul L."/>
            <person name="Aigle M."/>
            <person name="Anthouard V."/>
            <person name="Babour A."/>
            <person name="Barbe V."/>
            <person name="Barnay S."/>
            <person name="Blanchin S."/>
            <person name="Beckerich J.-M."/>
            <person name="Beyne E."/>
            <person name="Bleykasten C."/>
            <person name="Boisrame A."/>
            <person name="Boyer J."/>
            <person name="Cattolico L."/>
            <person name="Confanioleri F."/>
            <person name="de Daruvar A."/>
            <person name="Despons L."/>
            <person name="Fabre E."/>
            <person name="Fairhead C."/>
            <person name="Ferry-Dumazet H."/>
            <person name="Groppi A."/>
            <person name="Hantraye F."/>
            <person name="Hennequin C."/>
            <person name="Jauniaux N."/>
            <person name="Joyet P."/>
            <person name="Kachouri R."/>
            <person name="Kerrest A."/>
            <person name="Koszul R."/>
            <person name="Lemaire M."/>
            <person name="Lesur I."/>
            <person name="Ma L."/>
            <person name="Muller H."/>
            <person name="Nicaud J.-M."/>
            <person name="Nikolski M."/>
            <person name="Oztas S."/>
            <person name="Ozier-Kalogeropoulos O."/>
            <person name="Pellenz S."/>
            <person name="Potier S."/>
            <person name="Richard G.-F."/>
            <person name="Straub M.-L."/>
            <person name="Suleau A."/>
            <person name="Swennen D."/>
            <person name="Tekaia F."/>
            <person name="Wesolowski-Louvel M."/>
            <person name="Westhof E."/>
            <person name="Wirth B."/>
            <person name="Zeniou-Meyer M."/>
            <person name="Zivanovic Y."/>
            <person name="Bolotin-Fukuhara M."/>
            <person name="Thierry A."/>
            <person name="Bouchier C."/>
            <person name="Caudron B."/>
            <person name="Scarpelli C."/>
            <person name="Gaillardin C."/>
            <person name="Weissenbach J."/>
            <person name="Wincker P."/>
            <person name="Souciet J.-L."/>
        </authorList>
    </citation>
    <scope>NUCLEOTIDE SEQUENCE [LARGE SCALE GENOMIC DNA]</scope>
    <source>
        <strain>ATCC 36239 / CBS 767 / BCRC 21394 / JCM 1990 / NBRC 0083 / IGC 2968</strain>
    </source>
</reference>
<comment type="function">
    <text evidence="2">IMP-specific 5'-nucleotidase involved in IMP (inositol monophosphate) degradation.</text>
</comment>
<comment type="catalytic activity">
    <reaction evidence="2">
        <text>IMP + H2O = inosine + phosphate</text>
        <dbReference type="Rhea" id="RHEA:27718"/>
        <dbReference type="ChEBI" id="CHEBI:15377"/>
        <dbReference type="ChEBI" id="CHEBI:17596"/>
        <dbReference type="ChEBI" id="CHEBI:43474"/>
        <dbReference type="ChEBI" id="CHEBI:58053"/>
        <dbReference type="EC" id="3.1.3.99"/>
    </reaction>
</comment>
<comment type="cofactor">
    <cofactor evidence="2">
        <name>Mg(2+)</name>
        <dbReference type="ChEBI" id="CHEBI:18420"/>
    </cofactor>
</comment>
<comment type="activity regulation">
    <text evidence="1 2">Allosterically activated by ATP (By similarity). ATP binding is a prerequisite to magnesium and substrate binding. ATP binds to 2 of the subunits in the homotetramer inducing a closure of these 2 subunits and the release of the C-terminal loop, thereby activating the enzyme (By similarity).</text>
</comment>
<comment type="subunit">
    <text evidence="2">Homotetramer.</text>
</comment>
<comment type="similarity">
    <text evidence="3">Belongs to the ISN1 family.</text>
</comment>